<feature type="chain" id="PRO_1000092998" description="Peptidyl-tRNA hydrolase">
    <location>
        <begin position="1"/>
        <end position="187"/>
    </location>
</feature>
<feature type="active site" description="Proton acceptor" evidence="1">
    <location>
        <position position="19"/>
    </location>
</feature>
<feature type="binding site" evidence="1">
    <location>
        <position position="14"/>
    </location>
    <ligand>
        <name>tRNA</name>
        <dbReference type="ChEBI" id="CHEBI:17843"/>
    </ligand>
</feature>
<feature type="binding site" evidence="1">
    <location>
        <position position="63"/>
    </location>
    <ligand>
        <name>tRNA</name>
        <dbReference type="ChEBI" id="CHEBI:17843"/>
    </ligand>
</feature>
<feature type="binding site" evidence="1">
    <location>
        <position position="65"/>
    </location>
    <ligand>
        <name>tRNA</name>
        <dbReference type="ChEBI" id="CHEBI:17843"/>
    </ligand>
</feature>
<feature type="site" description="Discriminates between blocked and unblocked aminoacyl-tRNA" evidence="1">
    <location>
        <position position="9"/>
    </location>
</feature>
<feature type="site" description="Stabilizes the basic form of H active site to accept a proton" evidence="1">
    <location>
        <position position="92"/>
    </location>
</feature>
<protein>
    <recommendedName>
        <fullName evidence="1">Peptidyl-tRNA hydrolase</fullName>
        <shortName evidence="1">Pth</shortName>
        <ecNumber evidence="1">3.1.1.29</ecNumber>
    </recommendedName>
</protein>
<proteinExistence type="inferred from homology"/>
<organism>
    <name type="scientific">Thermodesulfovibrio yellowstonii (strain ATCC 51303 / DSM 11347 / YP87)</name>
    <dbReference type="NCBI Taxonomy" id="289376"/>
    <lineage>
        <taxon>Bacteria</taxon>
        <taxon>Pseudomonadati</taxon>
        <taxon>Nitrospirota</taxon>
        <taxon>Thermodesulfovibrionia</taxon>
        <taxon>Thermodesulfovibrionales</taxon>
        <taxon>Thermodesulfovibrionaceae</taxon>
        <taxon>Thermodesulfovibrio</taxon>
    </lineage>
</organism>
<comment type="function">
    <text evidence="1">Hydrolyzes ribosome-free peptidyl-tRNAs (with 1 or more amino acids incorporated), which drop off the ribosome during protein synthesis, or as a result of ribosome stalling.</text>
</comment>
<comment type="function">
    <text evidence="1">Catalyzes the release of premature peptidyl moieties from peptidyl-tRNA molecules trapped in stalled 50S ribosomal subunits, and thus maintains levels of free tRNAs and 50S ribosomes.</text>
</comment>
<comment type="catalytic activity">
    <reaction evidence="1">
        <text>an N-acyl-L-alpha-aminoacyl-tRNA + H2O = an N-acyl-L-amino acid + a tRNA + H(+)</text>
        <dbReference type="Rhea" id="RHEA:54448"/>
        <dbReference type="Rhea" id="RHEA-COMP:10123"/>
        <dbReference type="Rhea" id="RHEA-COMP:13883"/>
        <dbReference type="ChEBI" id="CHEBI:15377"/>
        <dbReference type="ChEBI" id="CHEBI:15378"/>
        <dbReference type="ChEBI" id="CHEBI:59874"/>
        <dbReference type="ChEBI" id="CHEBI:78442"/>
        <dbReference type="ChEBI" id="CHEBI:138191"/>
        <dbReference type="EC" id="3.1.1.29"/>
    </reaction>
</comment>
<comment type="subunit">
    <text evidence="1">Monomer.</text>
</comment>
<comment type="subcellular location">
    <subcellularLocation>
        <location evidence="1">Cytoplasm</location>
    </subcellularLocation>
</comment>
<comment type="similarity">
    <text evidence="1">Belongs to the PTH family.</text>
</comment>
<sequence length="187" mass="21037">MIVIVGLGNPGRKYAKTRHNVGFMVVDELARKYGLVFKEKNDYYITEWRLENKDITIIKPTTYMNLSGTAVKKVVNEKILKNLPESLIVIHDDVDMPLGKIKIKKNGSSGGHKGVQSIIDSLGTKDFIRIKIGIGKNPYQDVSEYVLSPFTSEQRAKIQEKISEAVESIVVIINEGVNKAMNIYNRL</sequence>
<dbReference type="EC" id="3.1.1.29" evidence="1"/>
<dbReference type="EMBL" id="CP001147">
    <property type="protein sequence ID" value="ACI20676.1"/>
    <property type="molecule type" value="Genomic_DNA"/>
</dbReference>
<dbReference type="RefSeq" id="WP_012545410.1">
    <property type="nucleotide sequence ID" value="NC_011296.1"/>
</dbReference>
<dbReference type="RefSeq" id="YP_002249252.1">
    <property type="nucleotide sequence ID" value="NC_011296.1"/>
</dbReference>
<dbReference type="SMR" id="B5YG54"/>
<dbReference type="FunCoup" id="B5YG54">
    <property type="interactions" value="333"/>
</dbReference>
<dbReference type="STRING" id="289376.THEYE_A1453"/>
<dbReference type="EnsemblBacteria" id="ACI20676">
    <property type="protein sequence ID" value="ACI20676"/>
    <property type="gene ID" value="THEYE_A1453"/>
</dbReference>
<dbReference type="KEGG" id="tye:THEYE_A1453"/>
<dbReference type="PATRIC" id="fig|289376.4.peg.1414"/>
<dbReference type="eggNOG" id="COG0193">
    <property type="taxonomic scope" value="Bacteria"/>
</dbReference>
<dbReference type="HOGENOM" id="CLU_062456_4_1_0"/>
<dbReference type="InParanoid" id="B5YG54"/>
<dbReference type="OrthoDB" id="9800507at2"/>
<dbReference type="Proteomes" id="UP000000718">
    <property type="component" value="Chromosome"/>
</dbReference>
<dbReference type="GO" id="GO:0005737">
    <property type="term" value="C:cytoplasm"/>
    <property type="evidence" value="ECO:0007669"/>
    <property type="project" value="UniProtKB-SubCell"/>
</dbReference>
<dbReference type="GO" id="GO:0004045">
    <property type="term" value="F:peptidyl-tRNA hydrolase activity"/>
    <property type="evidence" value="ECO:0000318"/>
    <property type="project" value="GO_Central"/>
</dbReference>
<dbReference type="GO" id="GO:0000049">
    <property type="term" value="F:tRNA binding"/>
    <property type="evidence" value="ECO:0007669"/>
    <property type="project" value="UniProtKB-UniRule"/>
</dbReference>
<dbReference type="GO" id="GO:0006515">
    <property type="term" value="P:protein quality control for misfolded or incompletely synthesized proteins"/>
    <property type="evidence" value="ECO:0007669"/>
    <property type="project" value="UniProtKB-UniRule"/>
</dbReference>
<dbReference type="GO" id="GO:0072344">
    <property type="term" value="P:rescue of stalled ribosome"/>
    <property type="evidence" value="ECO:0007669"/>
    <property type="project" value="UniProtKB-UniRule"/>
</dbReference>
<dbReference type="CDD" id="cd00462">
    <property type="entry name" value="PTH"/>
    <property type="match status" value="1"/>
</dbReference>
<dbReference type="FunFam" id="3.40.50.1470:FF:000001">
    <property type="entry name" value="Peptidyl-tRNA hydrolase"/>
    <property type="match status" value="1"/>
</dbReference>
<dbReference type="Gene3D" id="3.40.50.1470">
    <property type="entry name" value="Peptidyl-tRNA hydrolase"/>
    <property type="match status" value="1"/>
</dbReference>
<dbReference type="HAMAP" id="MF_00083">
    <property type="entry name" value="Pept_tRNA_hydro_bact"/>
    <property type="match status" value="1"/>
</dbReference>
<dbReference type="InterPro" id="IPR001328">
    <property type="entry name" value="Pept_tRNA_hydro"/>
</dbReference>
<dbReference type="InterPro" id="IPR018171">
    <property type="entry name" value="Pept_tRNA_hydro_CS"/>
</dbReference>
<dbReference type="InterPro" id="IPR036416">
    <property type="entry name" value="Pept_tRNA_hydro_sf"/>
</dbReference>
<dbReference type="NCBIfam" id="TIGR00447">
    <property type="entry name" value="pth"/>
    <property type="match status" value="1"/>
</dbReference>
<dbReference type="PANTHER" id="PTHR17224">
    <property type="entry name" value="PEPTIDYL-TRNA HYDROLASE"/>
    <property type="match status" value="1"/>
</dbReference>
<dbReference type="PANTHER" id="PTHR17224:SF1">
    <property type="entry name" value="PEPTIDYL-TRNA HYDROLASE"/>
    <property type="match status" value="1"/>
</dbReference>
<dbReference type="Pfam" id="PF01195">
    <property type="entry name" value="Pept_tRNA_hydro"/>
    <property type="match status" value="1"/>
</dbReference>
<dbReference type="SUPFAM" id="SSF53178">
    <property type="entry name" value="Peptidyl-tRNA hydrolase-like"/>
    <property type="match status" value="1"/>
</dbReference>
<dbReference type="PROSITE" id="PS01195">
    <property type="entry name" value="PEPT_TRNA_HYDROL_1"/>
    <property type="match status" value="1"/>
</dbReference>
<gene>
    <name evidence="1" type="primary">pth</name>
    <name type="ordered locus">THEYE_A1453</name>
</gene>
<name>PTH_THEYD</name>
<accession>B5YG54</accession>
<reference key="1">
    <citation type="submission" date="2008-08" db="EMBL/GenBank/DDBJ databases">
        <title>The complete genome sequence of Thermodesulfovibrio yellowstonii strain ATCC 51303 / DSM 11347 / YP87.</title>
        <authorList>
            <person name="Dodson R.J."/>
            <person name="Durkin A.S."/>
            <person name="Wu M."/>
            <person name="Eisen J."/>
            <person name="Sutton G."/>
        </authorList>
    </citation>
    <scope>NUCLEOTIDE SEQUENCE [LARGE SCALE GENOMIC DNA]</scope>
    <source>
        <strain>ATCC 51303 / DSM 11347 / YP87</strain>
    </source>
</reference>
<keyword id="KW-0963">Cytoplasm</keyword>
<keyword id="KW-0378">Hydrolase</keyword>
<keyword id="KW-1185">Reference proteome</keyword>
<keyword id="KW-0694">RNA-binding</keyword>
<keyword id="KW-0820">tRNA-binding</keyword>
<evidence type="ECO:0000255" key="1">
    <source>
        <dbReference type="HAMAP-Rule" id="MF_00083"/>
    </source>
</evidence>